<name>Y577_AQUAE</name>
<feature type="chain" id="PRO_0000186870" description="Uncharacterized protein aq_577">
    <location>
        <begin position="1"/>
        <end position="204"/>
    </location>
</feature>
<feature type="transmembrane region" description="Helical" evidence="1">
    <location>
        <begin position="21"/>
        <end position="50"/>
    </location>
</feature>
<feature type="transmembrane region" description="Helical" evidence="1">
    <location>
        <begin position="92"/>
        <end position="114"/>
    </location>
</feature>
<feature type="transmembrane region" description="Helical" evidence="1">
    <location>
        <begin position="150"/>
        <end position="172"/>
    </location>
</feature>
<feature type="transmembrane region" description="Helical" evidence="1">
    <location>
        <begin position="176"/>
        <end position="198"/>
    </location>
</feature>
<reference key="1">
    <citation type="journal article" date="1998" name="Nature">
        <title>The complete genome of the hyperthermophilic bacterium Aquifex aeolicus.</title>
        <authorList>
            <person name="Deckert G."/>
            <person name="Warren P.V."/>
            <person name="Gaasterland T."/>
            <person name="Young W.G."/>
            <person name="Lenox A.L."/>
            <person name="Graham D.E."/>
            <person name="Overbeek R."/>
            <person name="Snead M.A."/>
            <person name="Keller M."/>
            <person name="Aujay M."/>
            <person name="Huber R."/>
            <person name="Feldman R.A."/>
            <person name="Short J.M."/>
            <person name="Olsen G.J."/>
            <person name="Swanson R.V."/>
        </authorList>
    </citation>
    <scope>NUCLEOTIDE SEQUENCE [LARGE SCALE GENOMIC DNA]</scope>
    <source>
        <strain>VF5</strain>
    </source>
</reference>
<sequence length="204" mass="24063">MVEVLRSSTFLLLRNWEFTLAWIVFFTIPLVITPLPYVGFLAFFFILLFFNSTTQYFVKVLSKNEKSLEIKEIFKIKKPVFSFSLGESVYLFFTALLYYLFTKFYAVLFFWWWFYKPFLEKELYYARTFEDGFKALLILLLRPNWKYIKLGLRWSFIGLVLLTIAVLLVLSIAGVLLASFVVLLLSVVLAHFTAETILRIKTLA</sequence>
<keyword id="KW-1003">Cell membrane</keyword>
<keyword id="KW-0472">Membrane</keyword>
<keyword id="KW-1185">Reference proteome</keyword>
<keyword id="KW-0812">Transmembrane</keyword>
<keyword id="KW-1133">Transmembrane helix</keyword>
<comment type="subcellular location">
    <subcellularLocation>
        <location evidence="2">Cell membrane</location>
        <topology evidence="2">Multi-pass membrane protein</topology>
    </subcellularLocation>
</comment>
<evidence type="ECO:0000255" key="1"/>
<evidence type="ECO:0000305" key="2"/>
<protein>
    <recommendedName>
        <fullName>Uncharacterized protein aq_577</fullName>
    </recommendedName>
</protein>
<gene>
    <name type="ordered locus">aq_577</name>
</gene>
<proteinExistence type="predicted"/>
<dbReference type="EMBL" id="AE000657">
    <property type="protein sequence ID" value="AAC06805.1"/>
    <property type="molecule type" value="Genomic_DNA"/>
</dbReference>
<dbReference type="PIR" id="A70352">
    <property type="entry name" value="A70352"/>
</dbReference>
<dbReference type="RefSeq" id="NP_213405.1">
    <property type="nucleotide sequence ID" value="NC_000918.1"/>
</dbReference>
<dbReference type="RefSeq" id="WP_010880343.1">
    <property type="nucleotide sequence ID" value="NC_000918.1"/>
</dbReference>
<dbReference type="STRING" id="224324.aq_577"/>
<dbReference type="EnsemblBacteria" id="AAC06805">
    <property type="protein sequence ID" value="AAC06805"/>
    <property type="gene ID" value="aq_577"/>
</dbReference>
<dbReference type="KEGG" id="aae:aq_577"/>
<dbReference type="HOGENOM" id="CLU_1340955_0_0_0"/>
<dbReference type="InParanoid" id="O66845"/>
<dbReference type="Proteomes" id="UP000000798">
    <property type="component" value="Chromosome"/>
</dbReference>
<dbReference type="GO" id="GO:0005886">
    <property type="term" value="C:plasma membrane"/>
    <property type="evidence" value="ECO:0007669"/>
    <property type="project" value="UniProtKB-SubCell"/>
</dbReference>
<organism>
    <name type="scientific">Aquifex aeolicus (strain VF5)</name>
    <dbReference type="NCBI Taxonomy" id="224324"/>
    <lineage>
        <taxon>Bacteria</taxon>
        <taxon>Pseudomonadati</taxon>
        <taxon>Aquificota</taxon>
        <taxon>Aquificia</taxon>
        <taxon>Aquificales</taxon>
        <taxon>Aquificaceae</taxon>
        <taxon>Aquifex</taxon>
    </lineage>
</organism>
<accession>O66845</accession>